<accession>Q32LM8</accession>
<proteinExistence type="evidence at protein level"/>
<evidence type="ECO:0000250" key="1"/>
<evidence type="ECO:0000255" key="2"/>
<evidence type="ECO:0000305" key="3"/>
<name>NRM_BOVIN</name>
<dbReference type="EMBL" id="BC109506">
    <property type="protein sequence ID" value="AAI09507.1"/>
    <property type="molecule type" value="mRNA"/>
</dbReference>
<dbReference type="RefSeq" id="NP_001032685.1">
    <property type="nucleotide sequence ID" value="NM_001037596.2"/>
</dbReference>
<dbReference type="FunCoup" id="Q32LM8">
    <property type="interactions" value="2300"/>
</dbReference>
<dbReference type="IntAct" id="Q32LM8">
    <property type="interactions" value="1"/>
</dbReference>
<dbReference type="MINT" id="Q32LM8"/>
<dbReference type="STRING" id="9913.ENSBTAP00000035763"/>
<dbReference type="PaxDb" id="9913-ENSBTAP00000035763"/>
<dbReference type="Ensembl" id="ENSBTAT00000035896.3">
    <property type="protein sequence ID" value="ENSBTAP00000035763.2"/>
    <property type="gene ID" value="ENSBTAG00000006966.5"/>
</dbReference>
<dbReference type="GeneID" id="511167"/>
<dbReference type="KEGG" id="bta:511167"/>
<dbReference type="CTD" id="11270"/>
<dbReference type="VEuPathDB" id="HostDB:ENSBTAG00000006966"/>
<dbReference type="VGNC" id="VGNC:49560">
    <property type="gene designation" value="NRM"/>
</dbReference>
<dbReference type="eggNOG" id="ENOG502RS62">
    <property type="taxonomic scope" value="Eukaryota"/>
</dbReference>
<dbReference type="GeneTree" id="ENSGT00390000008146"/>
<dbReference type="HOGENOM" id="CLU_083708_1_0_1"/>
<dbReference type="InParanoid" id="Q32LM8"/>
<dbReference type="OMA" id="WSIWFPL"/>
<dbReference type="OrthoDB" id="10050858at2759"/>
<dbReference type="TreeFam" id="TF324853"/>
<dbReference type="Proteomes" id="UP000009136">
    <property type="component" value="Chromosome 23"/>
</dbReference>
<dbReference type="Bgee" id="ENSBTAG00000006966">
    <property type="expression patterns" value="Expressed in semen and 105 other cell types or tissues"/>
</dbReference>
<dbReference type="GO" id="GO:0005635">
    <property type="term" value="C:nuclear envelope"/>
    <property type="evidence" value="ECO:0000250"/>
    <property type="project" value="UniProtKB"/>
</dbReference>
<dbReference type="GO" id="GO:0005637">
    <property type="term" value="C:nuclear inner membrane"/>
    <property type="evidence" value="ECO:0007669"/>
    <property type="project" value="UniProtKB-SubCell"/>
</dbReference>
<dbReference type="GO" id="GO:0031965">
    <property type="term" value="C:nuclear membrane"/>
    <property type="evidence" value="ECO:0000318"/>
    <property type="project" value="GO_Central"/>
</dbReference>
<dbReference type="InterPro" id="IPR033580">
    <property type="entry name" value="Nurim-like"/>
</dbReference>
<dbReference type="PANTHER" id="PTHR31040">
    <property type="entry name" value="NURIM"/>
    <property type="match status" value="1"/>
</dbReference>
<dbReference type="PANTHER" id="PTHR31040:SF1">
    <property type="entry name" value="NURIM"/>
    <property type="match status" value="1"/>
</dbReference>
<reference key="1">
    <citation type="submission" date="2005-11" db="EMBL/GenBank/DDBJ databases">
        <authorList>
            <consortium name="NIH - Mammalian Gene Collection (MGC) project"/>
        </authorList>
    </citation>
    <scope>NUCLEOTIDE SEQUENCE [LARGE SCALE MRNA]</scope>
    <source>
        <strain>Crossbred X Angus</strain>
        <tissue>Liver</tissue>
    </source>
</reference>
<feature type="chain" id="PRO_0000299394" description="Nurim">
    <location>
        <begin position="1"/>
        <end position="262"/>
    </location>
</feature>
<feature type="topological domain" description="Nuclear" evidence="2">
    <location>
        <begin position="1"/>
        <end position="4"/>
    </location>
</feature>
<feature type="transmembrane region" description="Helical" evidence="2">
    <location>
        <begin position="5"/>
        <end position="28"/>
    </location>
</feature>
<feature type="topological domain" description="Perinuclear space" evidence="2">
    <location>
        <begin position="29"/>
        <end position="58"/>
    </location>
</feature>
<feature type="transmembrane region" description="Helical" evidence="2">
    <location>
        <begin position="59"/>
        <end position="80"/>
    </location>
</feature>
<feature type="topological domain" description="Nuclear" evidence="2">
    <location>
        <begin position="81"/>
        <end position="97"/>
    </location>
</feature>
<feature type="transmembrane region" description="Helical" evidence="2">
    <location>
        <begin position="98"/>
        <end position="114"/>
    </location>
</feature>
<feature type="topological domain" description="Perinuclear space" evidence="2">
    <location>
        <begin position="115"/>
        <end position="133"/>
    </location>
</feature>
<feature type="transmembrane region" description="Helical" evidence="2">
    <location>
        <begin position="134"/>
        <end position="164"/>
    </location>
</feature>
<feature type="topological domain" description="Nuclear" evidence="2">
    <location>
        <begin position="165"/>
        <end position="191"/>
    </location>
</feature>
<feature type="transmembrane region" description="Helical" evidence="2">
    <location>
        <begin position="192"/>
        <end position="210"/>
    </location>
</feature>
<feature type="topological domain" description="Perinuclear space" evidence="2">
    <location>
        <begin position="211"/>
        <end position="216"/>
    </location>
</feature>
<feature type="transmembrane region" description="Helical" evidence="2">
    <location>
        <begin position="217"/>
        <end position="234"/>
    </location>
</feature>
<feature type="topological domain" description="Nuclear" evidence="2">
    <location>
        <begin position="235"/>
        <end position="262"/>
    </location>
</feature>
<sequence>MAPALLLIPAALASFILAFGTGVEFVRFTSLRPLLGRISESGSPDARQGWLAALQDQSILVPLVWDLGLLLLFVGQHSLMATETVKEWMSRYFGVLQRSLYVACTALALQLVMRYWEPVPRGPVLWETRTEPWATWVPLLCFVLHVISWLLIFSILLVFDYAELMGLKQVYYHVLGLGEPLALKSPRALRLFSHLRHPVCVELLTVLWVVPTLGTDRLLLALLLTLYLGLAHGLDQHDLRYLRAQLQRKLHLLSRPQDGEAE</sequence>
<organism>
    <name type="scientific">Bos taurus</name>
    <name type="common">Bovine</name>
    <dbReference type="NCBI Taxonomy" id="9913"/>
    <lineage>
        <taxon>Eukaryota</taxon>
        <taxon>Metazoa</taxon>
        <taxon>Chordata</taxon>
        <taxon>Craniata</taxon>
        <taxon>Vertebrata</taxon>
        <taxon>Euteleostomi</taxon>
        <taxon>Mammalia</taxon>
        <taxon>Eutheria</taxon>
        <taxon>Laurasiatheria</taxon>
        <taxon>Artiodactyla</taxon>
        <taxon>Ruminantia</taxon>
        <taxon>Pecora</taxon>
        <taxon>Bovidae</taxon>
        <taxon>Bovinae</taxon>
        <taxon>Bos</taxon>
    </lineage>
</organism>
<protein>
    <recommendedName>
        <fullName>Nurim</fullName>
    </recommendedName>
    <alternativeName>
        <fullName>Nuclear envelope membrane protein</fullName>
    </alternativeName>
    <alternativeName>
        <fullName>Nuclear rim protein</fullName>
    </alternativeName>
</protein>
<keyword id="KW-0472">Membrane</keyword>
<keyword id="KW-0539">Nucleus</keyword>
<keyword id="KW-1185">Reference proteome</keyword>
<keyword id="KW-0812">Transmembrane</keyword>
<keyword id="KW-1133">Transmembrane helix</keyword>
<comment type="interaction">
    <interactant intactId="EBI-7079707">
        <id>Q32LM8</id>
    </interactant>
    <interactant intactId="EBI-6979031">
        <id>Q28181</id>
        <label>CNGB1</label>
    </interactant>
    <organismsDiffer>false</organismsDiffer>
    <experiments>4</experiments>
</comment>
<comment type="subcellular location">
    <subcellularLocation>
        <location evidence="1">Nucleus inner membrane</location>
        <topology evidence="1">Multi-pass membrane protein</topology>
    </subcellularLocation>
</comment>
<comment type="similarity">
    <text evidence="3">Belongs to the nurim family.</text>
</comment>
<gene>
    <name type="primary">NRM</name>
</gene>